<evidence type="ECO:0000255" key="1">
    <source>
        <dbReference type="HAMAP-Rule" id="MF_00374"/>
    </source>
</evidence>
<evidence type="ECO:0000305" key="2"/>
<organism>
    <name type="scientific">Salmonella typhi</name>
    <dbReference type="NCBI Taxonomy" id="90370"/>
    <lineage>
        <taxon>Bacteria</taxon>
        <taxon>Pseudomonadati</taxon>
        <taxon>Pseudomonadota</taxon>
        <taxon>Gammaproteobacteria</taxon>
        <taxon>Enterobacterales</taxon>
        <taxon>Enterobacteriaceae</taxon>
        <taxon>Salmonella</taxon>
    </lineage>
</organism>
<name>RL29_SALTI</name>
<comment type="similarity">
    <text evidence="1">Belongs to the universal ribosomal protein uL29 family.</text>
</comment>
<gene>
    <name evidence="1" type="primary">rpmC</name>
    <name type="ordered locus">STY4366</name>
    <name type="ordered locus">t4073</name>
</gene>
<protein>
    <recommendedName>
        <fullName evidence="1">Large ribosomal subunit protein uL29</fullName>
    </recommendedName>
    <alternativeName>
        <fullName evidence="2">50S ribosomal protein L29</fullName>
    </alternativeName>
</protein>
<sequence length="63" mass="7260">MKAKELREKSVEELNTELLNLLREQFNLRMQAASGQLQQSHLLKQVRRDVARVKTLLTEKAGA</sequence>
<keyword id="KW-0687">Ribonucleoprotein</keyword>
<keyword id="KW-0689">Ribosomal protein</keyword>
<accession>P66171</accession>
<accession>Q8XEZ6</accession>
<dbReference type="EMBL" id="AL513382">
    <property type="protein sequence ID" value="CAD08181.1"/>
    <property type="molecule type" value="Genomic_DNA"/>
</dbReference>
<dbReference type="EMBL" id="AE014613">
    <property type="protein sequence ID" value="AAO71540.1"/>
    <property type="molecule type" value="Genomic_DNA"/>
</dbReference>
<dbReference type="RefSeq" id="NP_458468.1">
    <property type="nucleotide sequence ID" value="NC_003198.1"/>
</dbReference>
<dbReference type="RefSeq" id="WP_000644742.1">
    <property type="nucleotide sequence ID" value="NZ_WSUR01000046.1"/>
</dbReference>
<dbReference type="SMR" id="P66171"/>
<dbReference type="STRING" id="220341.gene:17588194"/>
<dbReference type="GeneID" id="93035739"/>
<dbReference type="KEGG" id="stt:t4073"/>
<dbReference type="KEGG" id="sty:STY4366"/>
<dbReference type="PATRIC" id="fig|220341.7.peg.4462"/>
<dbReference type="eggNOG" id="COG0255">
    <property type="taxonomic scope" value="Bacteria"/>
</dbReference>
<dbReference type="HOGENOM" id="CLU_158491_1_2_6"/>
<dbReference type="OMA" id="RFQMATS"/>
<dbReference type="OrthoDB" id="9815192at2"/>
<dbReference type="Proteomes" id="UP000000541">
    <property type="component" value="Chromosome"/>
</dbReference>
<dbReference type="Proteomes" id="UP000002670">
    <property type="component" value="Chromosome"/>
</dbReference>
<dbReference type="GO" id="GO:0022625">
    <property type="term" value="C:cytosolic large ribosomal subunit"/>
    <property type="evidence" value="ECO:0007669"/>
    <property type="project" value="TreeGrafter"/>
</dbReference>
<dbReference type="GO" id="GO:0003735">
    <property type="term" value="F:structural constituent of ribosome"/>
    <property type="evidence" value="ECO:0007669"/>
    <property type="project" value="InterPro"/>
</dbReference>
<dbReference type="GO" id="GO:0006412">
    <property type="term" value="P:translation"/>
    <property type="evidence" value="ECO:0007669"/>
    <property type="project" value="UniProtKB-UniRule"/>
</dbReference>
<dbReference type="CDD" id="cd00427">
    <property type="entry name" value="Ribosomal_L29_HIP"/>
    <property type="match status" value="1"/>
</dbReference>
<dbReference type="Gene3D" id="6.10.140.1970">
    <property type="match status" value="1"/>
</dbReference>
<dbReference type="HAMAP" id="MF_00374">
    <property type="entry name" value="Ribosomal_uL29"/>
    <property type="match status" value="1"/>
</dbReference>
<dbReference type="InterPro" id="IPR050063">
    <property type="entry name" value="Ribosomal_protein_uL29"/>
</dbReference>
<dbReference type="InterPro" id="IPR001854">
    <property type="entry name" value="Ribosomal_uL29"/>
</dbReference>
<dbReference type="InterPro" id="IPR018254">
    <property type="entry name" value="Ribosomal_uL29_CS"/>
</dbReference>
<dbReference type="InterPro" id="IPR036049">
    <property type="entry name" value="Ribosomal_uL29_sf"/>
</dbReference>
<dbReference type="NCBIfam" id="TIGR00012">
    <property type="entry name" value="L29"/>
    <property type="match status" value="1"/>
</dbReference>
<dbReference type="PANTHER" id="PTHR10916">
    <property type="entry name" value="60S RIBOSOMAL PROTEIN L35/50S RIBOSOMAL PROTEIN L29"/>
    <property type="match status" value="1"/>
</dbReference>
<dbReference type="PANTHER" id="PTHR10916:SF0">
    <property type="entry name" value="LARGE RIBOSOMAL SUBUNIT PROTEIN UL29C"/>
    <property type="match status" value="1"/>
</dbReference>
<dbReference type="Pfam" id="PF00831">
    <property type="entry name" value="Ribosomal_L29"/>
    <property type="match status" value="1"/>
</dbReference>
<dbReference type="SUPFAM" id="SSF46561">
    <property type="entry name" value="Ribosomal protein L29 (L29p)"/>
    <property type="match status" value="1"/>
</dbReference>
<dbReference type="PROSITE" id="PS00579">
    <property type="entry name" value="RIBOSOMAL_L29"/>
    <property type="match status" value="1"/>
</dbReference>
<proteinExistence type="inferred from homology"/>
<reference key="1">
    <citation type="journal article" date="2001" name="Nature">
        <title>Complete genome sequence of a multiple drug resistant Salmonella enterica serovar Typhi CT18.</title>
        <authorList>
            <person name="Parkhill J."/>
            <person name="Dougan G."/>
            <person name="James K.D."/>
            <person name="Thomson N.R."/>
            <person name="Pickard D."/>
            <person name="Wain J."/>
            <person name="Churcher C.M."/>
            <person name="Mungall K.L."/>
            <person name="Bentley S.D."/>
            <person name="Holden M.T.G."/>
            <person name="Sebaihia M."/>
            <person name="Baker S."/>
            <person name="Basham D."/>
            <person name="Brooks K."/>
            <person name="Chillingworth T."/>
            <person name="Connerton P."/>
            <person name="Cronin A."/>
            <person name="Davis P."/>
            <person name="Davies R.M."/>
            <person name="Dowd L."/>
            <person name="White N."/>
            <person name="Farrar J."/>
            <person name="Feltwell T."/>
            <person name="Hamlin N."/>
            <person name="Haque A."/>
            <person name="Hien T.T."/>
            <person name="Holroyd S."/>
            <person name="Jagels K."/>
            <person name="Krogh A."/>
            <person name="Larsen T.S."/>
            <person name="Leather S."/>
            <person name="Moule S."/>
            <person name="O'Gaora P."/>
            <person name="Parry C."/>
            <person name="Quail M.A."/>
            <person name="Rutherford K.M."/>
            <person name="Simmonds M."/>
            <person name="Skelton J."/>
            <person name="Stevens K."/>
            <person name="Whitehead S."/>
            <person name="Barrell B.G."/>
        </authorList>
    </citation>
    <scope>NUCLEOTIDE SEQUENCE [LARGE SCALE GENOMIC DNA]</scope>
    <source>
        <strain>CT18</strain>
    </source>
</reference>
<reference key="2">
    <citation type="journal article" date="2003" name="J. Bacteriol.">
        <title>Comparative genomics of Salmonella enterica serovar Typhi strains Ty2 and CT18.</title>
        <authorList>
            <person name="Deng W."/>
            <person name="Liou S.-R."/>
            <person name="Plunkett G. III"/>
            <person name="Mayhew G.F."/>
            <person name="Rose D.J."/>
            <person name="Burland V."/>
            <person name="Kodoyianni V."/>
            <person name="Schwartz D.C."/>
            <person name="Blattner F.R."/>
        </authorList>
    </citation>
    <scope>NUCLEOTIDE SEQUENCE [LARGE SCALE GENOMIC DNA]</scope>
    <source>
        <strain>ATCC 700931 / Ty2</strain>
    </source>
</reference>
<feature type="chain" id="PRO_0000130449" description="Large ribosomal subunit protein uL29">
    <location>
        <begin position="1"/>
        <end position="63"/>
    </location>
</feature>